<dbReference type="EMBL" id="AB012922">
    <property type="protein sequence ID" value="BAA36562.1"/>
    <property type="molecule type" value="Genomic_DNA"/>
</dbReference>
<dbReference type="EMBL" id="AB016591">
    <property type="protein sequence ID" value="BAA36707.1"/>
    <property type="molecule type" value="mRNA"/>
</dbReference>
<dbReference type="EMBL" id="AF295807">
    <property type="protein sequence ID" value="AAG02241.1"/>
    <property type="molecule type" value="mRNA"/>
</dbReference>
<dbReference type="EMBL" id="AK301569">
    <property type="protein sequence ID" value="BAG63063.1"/>
    <property type="molecule type" value="mRNA"/>
</dbReference>
<dbReference type="EMBL" id="CR749481">
    <property type="protein sequence ID" value="CAH18309.1"/>
    <property type="molecule type" value="mRNA"/>
</dbReference>
<dbReference type="EMBL" id="AP001458">
    <property type="status" value="NOT_ANNOTATED_CDS"/>
    <property type="molecule type" value="Genomic_DNA"/>
</dbReference>
<dbReference type="EMBL" id="BC023656">
    <property type="protein sequence ID" value="AAH23656.1"/>
    <property type="status" value="ALT_SEQ"/>
    <property type="molecule type" value="mRNA"/>
</dbReference>
<dbReference type="EMBL" id="BC053650">
    <property type="protein sequence ID" value="AAH53650.1"/>
    <property type="molecule type" value="mRNA"/>
</dbReference>
<dbReference type="CCDS" id="CCDS8022.1">
    <molecule id="O94776-1"/>
</dbReference>
<dbReference type="CCDS" id="CCDS81576.1">
    <molecule id="O94776-2"/>
</dbReference>
<dbReference type="RefSeq" id="NP_001317221.1">
    <molecule id="O94776-2"/>
    <property type="nucleotide sequence ID" value="NM_001330292.2"/>
</dbReference>
<dbReference type="RefSeq" id="NP_004730.2">
    <molecule id="O94776-1"/>
    <property type="nucleotide sequence ID" value="NM_004739.3"/>
</dbReference>
<dbReference type="SMR" id="O94776"/>
<dbReference type="BioGRID" id="114652">
    <property type="interactions" value="451"/>
</dbReference>
<dbReference type="ComplexPortal" id="CPX-880">
    <property type="entry name" value="MBD2/NuRD nucleosome remodeling and deacetylase complex"/>
</dbReference>
<dbReference type="ComplexPortal" id="CPX-922">
    <property type="entry name" value="MBD3/NuRD nucleosome remodeling and deacetylase complex"/>
</dbReference>
<dbReference type="CORUM" id="O94776"/>
<dbReference type="DIP" id="DIP-46519N"/>
<dbReference type="FunCoup" id="O94776">
    <property type="interactions" value="3244"/>
</dbReference>
<dbReference type="IntAct" id="O94776">
    <property type="interactions" value="169"/>
</dbReference>
<dbReference type="MINT" id="O94776"/>
<dbReference type="STRING" id="9606.ENSP00000278823"/>
<dbReference type="GlyGen" id="O94776">
    <property type="glycosylation" value="1 site, 1 O-linked glycan (1 site)"/>
</dbReference>
<dbReference type="iPTMnet" id="O94776"/>
<dbReference type="PhosphoSitePlus" id="O94776"/>
<dbReference type="SwissPalm" id="O94776"/>
<dbReference type="BioMuta" id="MTA2"/>
<dbReference type="jPOST" id="O94776"/>
<dbReference type="MassIVE" id="O94776"/>
<dbReference type="PaxDb" id="9606-ENSP00000278823"/>
<dbReference type="PeptideAtlas" id="O94776"/>
<dbReference type="ProteomicsDB" id="50436">
    <molecule id="O94776-1"/>
</dbReference>
<dbReference type="ProteomicsDB" id="66069"/>
<dbReference type="Pumba" id="O94776"/>
<dbReference type="ABCD" id="O94776">
    <property type="antibodies" value="1 sequenced antibody"/>
</dbReference>
<dbReference type="Antibodypedia" id="1799">
    <property type="antibodies" value="422 antibodies from 40 providers"/>
</dbReference>
<dbReference type="DNASU" id="9219"/>
<dbReference type="Ensembl" id="ENST00000278823.7">
    <molecule id="O94776-1"/>
    <property type="protein sequence ID" value="ENSP00000278823.2"/>
    <property type="gene ID" value="ENSG00000149480.7"/>
</dbReference>
<dbReference type="Ensembl" id="ENST00000524902.5">
    <molecule id="O94776-2"/>
    <property type="protein sequence ID" value="ENSP00000431346.1"/>
    <property type="gene ID" value="ENSG00000149480.7"/>
</dbReference>
<dbReference type="Ensembl" id="ENST00000527204.5">
    <molecule id="O94776-2"/>
    <property type="protein sequence ID" value="ENSP00000431797.1"/>
    <property type="gene ID" value="ENSG00000149480.7"/>
</dbReference>
<dbReference type="GeneID" id="9219"/>
<dbReference type="KEGG" id="hsa:9219"/>
<dbReference type="MANE-Select" id="ENST00000278823.7">
    <property type="protein sequence ID" value="ENSP00000278823.2"/>
    <property type="RefSeq nucleotide sequence ID" value="NM_004739.4"/>
    <property type="RefSeq protein sequence ID" value="NP_004730.2"/>
</dbReference>
<dbReference type="UCSC" id="uc001ntq.3">
    <molecule id="O94776-1"/>
    <property type="organism name" value="human"/>
</dbReference>
<dbReference type="AGR" id="HGNC:7411"/>
<dbReference type="CTD" id="9219"/>
<dbReference type="DisGeNET" id="9219"/>
<dbReference type="GeneCards" id="MTA2"/>
<dbReference type="HGNC" id="HGNC:7411">
    <property type="gene designation" value="MTA2"/>
</dbReference>
<dbReference type="HPA" id="ENSG00000149480">
    <property type="expression patterns" value="Low tissue specificity"/>
</dbReference>
<dbReference type="MIM" id="603947">
    <property type="type" value="gene"/>
</dbReference>
<dbReference type="neXtProt" id="NX_O94776"/>
<dbReference type="OpenTargets" id="ENSG00000149480"/>
<dbReference type="PharmGKB" id="PA31219"/>
<dbReference type="VEuPathDB" id="HostDB:ENSG00000149480"/>
<dbReference type="eggNOG" id="KOG3554">
    <property type="taxonomic scope" value="Eukaryota"/>
</dbReference>
<dbReference type="GeneTree" id="ENSGT01030000234573"/>
<dbReference type="HOGENOM" id="CLU_006585_2_0_1"/>
<dbReference type="InParanoid" id="O94776"/>
<dbReference type="OMA" id="IRVGCKF"/>
<dbReference type="OrthoDB" id="2193595at2759"/>
<dbReference type="PAN-GO" id="O94776">
    <property type="GO annotations" value="7 GO annotations based on evolutionary models"/>
</dbReference>
<dbReference type="PhylomeDB" id="O94776"/>
<dbReference type="TreeFam" id="TF106444"/>
<dbReference type="PathwayCommons" id="O94776"/>
<dbReference type="Reactome" id="R-HSA-3214815">
    <property type="pathway name" value="HDACs deacetylate histones"/>
</dbReference>
<dbReference type="Reactome" id="R-HSA-427389">
    <property type="pathway name" value="ERCC6 (CSB) and EHMT2 (G9a) positively regulate rRNA expression"/>
</dbReference>
<dbReference type="Reactome" id="R-HSA-6804758">
    <property type="pathway name" value="Regulation of TP53 Activity through Acetylation"/>
</dbReference>
<dbReference type="Reactome" id="R-HSA-73762">
    <property type="pathway name" value="RNA Polymerase I Transcription Initiation"/>
</dbReference>
<dbReference type="Reactome" id="R-HSA-8943724">
    <property type="pathway name" value="Regulation of PTEN gene transcription"/>
</dbReference>
<dbReference type="Reactome" id="R-HSA-9679191">
    <property type="pathway name" value="Potential therapeutics for SARS"/>
</dbReference>
<dbReference type="Reactome" id="R-HSA-9843940">
    <property type="pathway name" value="Regulation of endogenous retroelements by KRAB-ZFP proteins"/>
</dbReference>
<dbReference type="Reactome" id="R-HSA-9844594">
    <property type="pathway name" value="Transcriptional regulation of brown and beige adipocyte differentiation by EBF2"/>
</dbReference>
<dbReference type="Reactome" id="R-HSA-9845323">
    <property type="pathway name" value="Regulation of endogenous retroelements by Piwi-interacting RNAs (piRNAs)"/>
</dbReference>
<dbReference type="SignaLink" id="O94776"/>
<dbReference type="SIGNOR" id="O94776"/>
<dbReference type="BioGRID-ORCS" id="9219">
    <property type="hits" value="86 hits in 1190 CRISPR screens"/>
</dbReference>
<dbReference type="ChiTaRS" id="MTA2">
    <property type="organism name" value="human"/>
</dbReference>
<dbReference type="GeneWiki" id="MTA2"/>
<dbReference type="GenomeRNAi" id="9219"/>
<dbReference type="Pharos" id="O94776">
    <property type="development level" value="Tbio"/>
</dbReference>
<dbReference type="PRO" id="PR:O94776"/>
<dbReference type="Proteomes" id="UP000005640">
    <property type="component" value="Chromosome 11"/>
</dbReference>
<dbReference type="RNAct" id="O94776">
    <property type="molecule type" value="protein"/>
</dbReference>
<dbReference type="Bgee" id="ENSG00000149480">
    <property type="expression patterns" value="Expressed in granulocyte and 92 other cell types or tissues"/>
</dbReference>
<dbReference type="ExpressionAtlas" id="O94776">
    <property type="expression patterns" value="baseline and differential"/>
</dbReference>
<dbReference type="GO" id="GO:0000785">
    <property type="term" value="C:chromatin"/>
    <property type="evidence" value="ECO:0007005"/>
    <property type="project" value="UniProtKB"/>
</dbReference>
<dbReference type="GO" id="GO:0000781">
    <property type="term" value="C:chromosome, telomeric region"/>
    <property type="evidence" value="ECO:0000314"/>
    <property type="project" value="UniProtKB"/>
</dbReference>
<dbReference type="GO" id="GO:0000118">
    <property type="term" value="C:histone deacetylase complex"/>
    <property type="evidence" value="ECO:0000304"/>
    <property type="project" value="ProtInc"/>
</dbReference>
<dbReference type="GO" id="GO:0016020">
    <property type="term" value="C:membrane"/>
    <property type="evidence" value="ECO:0007005"/>
    <property type="project" value="UniProtKB"/>
</dbReference>
<dbReference type="GO" id="GO:0005654">
    <property type="term" value="C:nucleoplasm"/>
    <property type="evidence" value="ECO:0000314"/>
    <property type="project" value="HPA"/>
</dbReference>
<dbReference type="GO" id="GO:0005634">
    <property type="term" value="C:nucleus"/>
    <property type="evidence" value="ECO:0000314"/>
    <property type="project" value="UniProtKB"/>
</dbReference>
<dbReference type="GO" id="GO:0016581">
    <property type="term" value="C:NuRD complex"/>
    <property type="evidence" value="ECO:0000314"/>
    <property type="project" value="UniProtKB"/>
</dbReference>
<dbReference type="GO" id="GO:0032991">
    <property type="term" value="C:protein-containing complex"/>
    <property type="evidence" value="ECO:0007005"/>
    <property type="project" value="UniProtKB"/>
</dbReference>
<dbReference type="GO" id="GO:0005667">
    <property type="term" value="C:transcription regulator complex"/>
    <property type="evidence" value="ECO:0000314"/>
    <property type="project" value="BHF-UCL"/>
</dbReference>
<dbReference type="GO" id="GO:0003682">
    <property type="term" value="F:chromatin binding"/>
    <property type="evidence" value="ECO:0007669"/>
    <property type="project" value="InterPro"/>
</dbReference>
<dbReference type="GO" id="GO:0004407">
    <property type="term" value="F:histone deacetylase activity"/>
    <property type="evidence" value="ECO:0007669"/>
    <property type="project" value="Ensembl"/>
</dbReference>
<dbReference type="GO" id="GO:0042826">
    <property type="term" value="F:histone deacetylase binding"/>
    <property type="evidence" value="ECO:0000318"/>
    <property type="project" value="GO_Central"/>
</dbReference>
<dbReference type="GO" id="GO:0061629">
    <property type="term" value="F:RNA polymerase II-specific DNA-binding transcription factor binding"/>
    <property type="evidence" value="ECO:0000353"/>
    <property type="project" value="BHF-UCL"/>
</dbReference>
<dbReference type="GO" id="GO:0043565">
    <property type="term" value="F:sequence-specific DNA binding"/>
    <property type="evidence" value="ECO:0007669"/>
    <property type="project" value="InterPro"/>
</dbReference>
<dbReference type="GO" id="GO:0003713">
    <property type="term" value="F:transcription coactivator activity"/>
    <property type="evidence" value="ECO:0000318"/>
    <property type="project" value="GO_Central"/>
</dbReference>
<dbReference type="GO" id="GO:0003714">
    <property type="term" value="F:transcription corepressor activity"/>
    <property type="evidence" value="ECO:0000318"/>
    <property type="project" value="GO_Central"/>
</dbReference>
<dbReference type="GO" id="GO:0008270">
    <property type="term" value="F:zinc ion binding"/>
    <property type="evidence" value="ECO:0007669"/>
    <property type="project" value="UniProtKB-KW"/>
</dbReference>
<dbReference type="GO" id="GO:0006325">
    <property type="term" value="P:chromatin organization"/>
    <property type="evidence" value="ECO:0000304"/>
    <property type="project" value="ProtInc"/>
</dbReference>
<dbReference type="GO" id="GO:0006338">
    <property type="term" value="P:chromatin remodeling"/>
    <property type="evidence" value="ECO:0000314"/>
    <property type="project" value="ComplexPortal"/>
</dbReference>
<dbReference type="GO" id="GO:0071514">
    <property type="term" value="P:genomic imprinting"/>
    <property type="evidence" value="ECO:0007669"/>
    <property type="project" value="Ensembl"/>
</dbReference>
<dbReference type="GO" id="GO:0045892">
    <property type="term" value="P:negative regulation of DNA-templated transcription"/>
    <property type="evidence" value="ECO:0000303"/>
    <property type="project" value="ComplexPortal"/>
</dbReference>
<dbReference type="GO" id="GO:0000122">
    <property type="term" value="P:negative regulation of transcription by RNA polymerase II"/>
    <property type="evidence" value="ECO:0000318"/>
    <property type="project" value="GO_Central"/>
</dbReference>
<dbReference type="GO" id="GO:0045893">
    <property type="term" value="P:positive regulation of DNA-templated transcription"/>
    <property type="evidence" value="ECO:0000303"/>
    <property type="project" value="ComplexPortal"/>
</dbReference>
<dbReference type="GO" id="GO:0045944">
    <property type="term" value="P:positive regulation of transcription by RNA polymerase II"/>
    <property type="evidence" value="ECO:0007669"/>
    <property type="project" value="Ensembl"/>
</dbReference>
<dbReference type="GO" id="GO:0042659">
    <property type="term" value="P:regulation of cell fate specification"/>
    <property type="evidence" value="ECO:0000303"/>
    <property type="project" value="ComplexPortal"/>
</dbReference>
<dbReference type="GO" id="GO:0010762">
    <property type="term" value="P:regulation of fibroblast migration"/>
    <property type="evidence" value="ECO:0007669"/>
    <property type="project" value="Ensembl"/>
</dbReference>
<dbReference type="GO" id="GO:2000736">
    <property type="term" value="P:regulation of stem cell differentiation"/>
    <property type="evidence" value="ECO:0000303"/>
    <property type="project" value="ComplexPortal"/>
</dbReference>
<dbReference type="CDD" id="cd04709">
    <property type="entry name" value="BAH_MTA"/>
    <property type="match status" value="1"/>
</dbReference>
<dbReference type="CDD" id="cd11661">
    <property type="entry name" value="SANT_MTA3_like"/>
    <property type="match status" value="1"/>
</dbReference>
<dbReference type="CDD" id="cd00202">
    <property type="entry name" value="ZnF_GATA"/>
    <property type="match status" value="1"/>
</dbReference>
<dbReference type="FunFam" id="1.10.10.60:FF:000012">
    <property type="entry name" value="Metastasis-associated 1 family, member 3"/>
    <property type="match status" value="1"/>
</dbReference>
<dbReference type="FunFam" id="2.30.30.490:FF:000001">
    <property type="entry name" value="Metastasis-associated 1 family, member 3"/>
    <property type="match status" value="1"/>
</dbReference>
<dbReference type="FunFam" id="4.10.1240.50:FF:000001">
    <property type="entry name" value="Metastasis-associated 1 family, member 3"/>
    <property type="match status" value="1"/>
</dbReference>
<dbReference type="Gene3D" id="2.30.30.490">
    <property type="match status" value="1"/>
</dbReference>
<dbReference type="Gene3D" id="4.10.1240.50">
    <property type="match status" value="1"/>
</dbReference>
<dbReference type="Gene3D" id="1.10.10.60">
    <property type="entry name" value="Homeodomain-like"/>
    <property type="match status" value="1"/>
</dbReference>
<dbReference type="InterPro" id="IPR001025">
    <property type="entry name" value="BAH_dom"/>
</dbReference>
<dbReference type="InterPro" id="IPR043151">
    <property type="entry name" value="BAH_sf"/>
</dbReference>
<dbReference type="InterPro" id="IPR000949">
    <property type="entry name" value="ELM2_dom"/>
</dbReference>
<dbReference type="InterPro" id="IPR009057">
    <property type="entry name" value="Homeodomain-like_sf"/>
</dbReference>
<dbReference type="InterPro" id="IPR040138">
    <property type="entry name" value="MIER/MTA"/>
</dbReference>
<dbReference type="InterPro" id="IPR035170">
    <property type="entry name" value="MTA1_R1"/>
</dbReference>
<dbReference type="InterPro" id="IPR001005">
    <property type="entry name" value="SANT/Myb"/>
</dbReference>
<dbReference type="InterPro" id="IPR017884">
    <property type="entry name" value="SANT_dom"/>
</dbReference>
<dbReference type="InterPro" id="IPR000679">
    <property type="entry name" value="Znf_GATA"/>
</dbReference>
<dbReference type="PANTHER" id="PTHR10865">
    <property type="entry name" value="METASTASIS-ASSOCIATED PROTEIN AND MESODERM INDUCTION EARLY RESPONSE PROTEIN"/>
    <property type="match status" value="1"/>
</dbReference>
<dbReference type="PANTHER" id="PTHR10865:SF4">
    <property type="entry name" value="METASTASIS-ASSOCIATED PROTEIN MTA2"/>
    <property type="match status" value="1"/>
</dbReference>
<dbReference type="Pfam" id="PF01426">
    <property type="entry name" value="BAH"/>
    <property type="match status" value="1"/>
</dbReference>
<dbReference type="Pfam" id="PF01448">
    <property type="entry name" value="ELM2"/>
    <property type="match status" value="1"/>
</dbReference>
<dbReference type="Pfam" id="PF00320">
    <property type="entry name" value="GATA"/>
    <property type="match status" value="1"/>
</dbReference>
<dbReference type="Pfam" id="PF17226">
    <property type="entry name" value="MTA_R1"/>
    <property type="match status" value="1"/>
</dbReference>
<dbReference type="Pfam" id="PF00249">
    <property type="entry name" value="Myb_DNA-binding"/>
    <property type="match status" value="1"/>
</dbReference>
<dbReference type="SMART" id="SM00439">
    <property type="entry name" value="BAH"/>
    <property type="match status" value="1"/>
</dbReference>
<dbReference type="SMART" id="SM01189">
    <property type="entry name" value="ELM2"/>
    <property type="match status" value="1"/>
</dbReference>
<dbReference type="SMART" id="SM00717">
    <property type="entry name" value="SANT"/>
    <property type="match status" value="1"/>
</dbReference>
<dbReference type="SMART" id="SM00401">
    <property type="entry name" value="ZnF_GATA"/>
    <property type="match status" value="1"/>
</dbReference>
<dbReference type="SUPFAM" id="SSF46689">
    <property type="entry name" value="Homeodomain-like"/>
    <property type="match status" value="1"/>
</dbReference>
<dbReference type="PROSITE" id="PS51038">
    <property type="entry name" value="BAH"/>
    <property type="match status" value="1"/>
</dbReference>
<dbReference type="PROSITE" id="PS51156">
    <property type="entry name" value="ELM2"/>
    <property type="match status" value="1"/>
</dbReference>
<dbReference type="PROSITE" id="PS51293">
    <property type="entry name" value="SANT"/>
    <property type="match status" value="1"/>
</dbReference>
<evidence type="ECO:0000250" key="1">
    <source>
        <dbReference type="UniProtKB" id="Q9R190"/>
    </source>
</evidence>
<evidence type="ECO:0000255" key="2">
    <source>
        <dbReference type="PROSITE-ProRule" id="PRU00370"/>
    </source>
</evidence>
<evidence type="ECO:0000255" key="3">
    <source>
        <dbReference type="PROSITE-ProRule" id="PRU00512"/>
    </source>
</evidence>
<evidence type="ECO:0000255" key="4">
    <source>
        <dbReference type="PROSITE-ProRule" id="PRU00624"/>
    </source>
</evidence>
<evidence type="ECO:0000256" key="5">
    <source>
        <dbReference type="SAM" id="MobiDB-lite"/>
    </source>
</evidence>
<evidence type="ECO:0000269" key="6">
    <source>
    </source>
</evidence>
<evidence type="ECO:0000269" key="7">
    <source>
    </source>
</evidence>
<evidence type="ECO:0000269" key="8">
    <source>
    </source>
</evidence>
<evidence type="ECO:0000269" key="9">
    <source>
    </source>
</evidence>
<evidence type="ECO:0000269" key="10">
    <source>
    </source>
</evidence>
<evidence type="ECO:0000269" key="11">
    <source>
    </source>
</evidence>
<evidence type="ECO:0000269" key="12">
    <source>
    </source>
</evidence>
<evidence type="ECO:0000269" key="13">
    <source>
    </source>
</evidence>
<evidence type="ECO:0000269" key="14">
    <source>
    </source>
</evidence>
<evidence type="ECO:0000303" key="15">
    <source>
    </source>
</evidence>
<evidence type="ECO:0000303" key="16">
    <source>
    </source>
</evidence>
<evidence type="ECO:0000305" key="17"/>
<evidence type="ECO:0007744" key="18">
    <source>
    </source>
</evidence>
<evidence type="ECO:0007744" key="19">
    <source>
    </source>
</evidence>
<evidence type="ECO:0007744" key="20">
    <source>
    </source>
</evidence>
<evidence type="ECO:0007744" key="21">
    <source>
    </source>
</evidence>
<evidence type="ECO:0007744" key="22">
    <source>
    </source>
</evidence>
<evidence type="ECO:0007744" key="23">
    <source>
    </source>
</evidence>
<evidence type="ECO:0007744" key="24">
    <source>
    </source>
</evidence>
<evidence type="ECO:0007744" key="25">
    <source>
    </source>
</evidence>
<keyword id="KW-0007">Acetylation</keyword>
<keyword id="KW-0025">Alternative splicing</keyword>
<keyword id="KW-0238">DNA-binding</keyword>
<keyword id="KW-1017">Isopeptide bond</keyword>
<keyword id="KW-0479">Metal-binding</keyword>
<keyword id="KW-0539">Nucleus</keyword>
<keyword id="KW-0597">Phosphoprotein</keyword>
<keyword id="KW-1267">Proteomics identification</keyword>
<keyword id="KW-1185">Reference proteome</keyword>
<keyword id="KW-0832">Ubl conjugation</keyword>
<keyword id="KW-0862">Zinc</keyword>
<keyword id="KW-0863">Zinc-finger</keyword>
<accession>O94776</accession>
<accession>Q68DB1</accession>
<accession>Q9UQB5</accession>
<gene>
    <name type="primary">MTA2</name>
    <name type="synonym">MTA1L1</name>
    <name type="synonym">PID</name>
</gene>
<sequence>MAANMYRVGDYVYFENSSSNPYLVRRIEELNKTANGNVEAKVVCLFRRRDISSSLNSLADSNAREFEEESKQPGVSEQQRHQLKHRELFLSRQFESLPATHIRGKCSVTLLNETDILSQYLEKEDCFFYSLVFDPVQKTLLADQGEIRVGCKYQAEIPDRLVEGESDNRNQQKMEMKVWDPDNPLTDRQIDQFLVVARAVGTFARALDCSSSIRQPSLHMSAAAASRDITLFHAMDTLQRNGYDLAKAMSTLVPQGGPVLCRDEMEEWSASEAMLFEEALEKYGKDFNDIRQDFLPWKSLASIVQFYYMWKTTDRYIQQKRLKAAEADSKLKQVYIPTYTKPNPNQIISVGSKPGMNGAGFQKGLTCESCHTTQSAQWYAWGPPNMQCRLCASCWIYWKKYGGLKTPTQLEGATRGTTEPHSRGHLSRPEAQSLSPYTTSANRAKLLAKNRQTFLLQTTKLTRLARRMCRDLLQPRRAARRPYAPINANAIKAECSIRLPKAAKTPLKIHPLVRLPLATIVKDLVAQAPLKPKTPRGTKTPINRNQLSQNRGLGGIMVKRAYETMAGAGVPFSANGRPLASGIRSSSQPAAKRQKLNPADAPNPVVFVATKDTRALRKALTHLEMRRAARRPNLPLKVKPTLIAVRPPVPLPAPSHPASTNEPIVLED</sequence>
<name>MTA2_HUMAN</name>
<protein>
    <recommendedName>
        <fullName>Metastasis-associated protein MTA2</fullName>
    </recommendedName>
    <alternativeName>
        <fullName>Metastasis-associated 1-like 1</fullName>
        <shortName>MTA1-L1 protein</shortName>
    </alternativeName>
    <alternativeName>
        <fullName>p53 target protein in deacetylase complex</fullName>
    </alternativeName>
</protein>
<feature type="chain" id="PRO_0000083496" description="Metastasis-associated protein MTA2">
    <location>
        <begin position="1"/>
        <end position="668"/>
    </location>
</feature>
<feature type="domain" description="BAH" evidence="2">
    <location>
        <begin position="1"/>
        <end position="144"/>
    </location>
</feature>
<feature type="domain" description="ELM2" evidence="3">
    <location>
        <begin position="145"/>
        <end position="256"/>
    </location>
</feature>
<feature type="domain" description="SANT" evidence="4">
    <location>
        <begin position="263"/>
        <end position="315"/>
    </location>
</feature>
<feature type="zinc finger region" description="GATA-type; atypical">
    <location>
        <begin position="367"/>
        <end position="394"/>
    </location>
</feature>
<feature type="region of interest" description="Disordered" evidence="5">
    <location>
        <begin position="409"/>
        <end position="437"/>
    </location>
</feature>
<feature type="region of interest" description="Disordered" evidence="5">
    <location>
        <begin position="580"/>
        <end position="599"/>
    </location>
</feature>
<feature type="region of interest" description="Disordered" evidence="5">
    <location>
        <begin position="647"/>
        <end position="668"/>
    </location>
</feature>
<feature type="compositionally biased region" description="Polar residues" evidence="5">
    <location>
        <begin position="409"/>
        <end position="419"/>
    </location>
</feature>
<feature type="modified residue" description="Phosphoserine" evidence="23">
    <location>
        <position position="52"/>
    </location>
</feature>
<feature type="modified residue" description="Phosphoserine" evidence="23">
    <location>
        <position position="54"/>
    </location>
</feature>
<feature type="modified residue" description="N6-acetyllysine" evidence="19">
    <location>
        <position position="152"/>
    </location>
</feature>
<feature type="modified residue" description="Phosphoserine" evidence="18">
    <location>
        <position position="433"/>
    </location>
</feature>
<feature type="modified residue" description="Phosphoserine" evidence="18 20 21 23 24">
    <location>
        <position position="435"/>
    </location>
</feature>
<feature type="modified residue" description="N6-acetyllysine" evidence="1">
    <location>
        <position position="460"/>
    </location>
</feature>
<feature type="modified residue" description="N6-acetyllysine" evidence="1">
    <location>
        <position position="522"/>
    </location>
</feature>
<feature type="modified residue" description="N6-acetyllysine" evidence="1">
    <location>
        <position position="531"/>
    </location>
</feature>
<feature type="modified residue" description="Phosphothreonine" evidence="21 23">
    <location>
        <position position="534"/>
    </location>
</feature>
<feature type="modified residue" description="Phosphoserine" evidence="22 23">
    <location>
        <position position="548"/>
    </location>
</feature>
<feature type="cross-link" description="Glycyl lysine isopeptide (Lys-Gly) (interchain with G-Cter in SUMO2 and SUMO3); alternate" evidence="17">
    <location>
        <position position="492"/>
    </location>
</feature>
<feature type="cross-link" description="Glycyl lysine isopeptide (Lys-Gly) (interchain with G-Cter in SUMO2); alternate" evidence="25">
    <location>
        <position position="492"/>
    </location>
</feature>
<feature type="cross-link" description="Glycyl lysine isopeptide (Lys-Gly) (interchain with G-Cter in SUMO2)" evidence="25">
    <location>
        <position position="508"/>
    </location>
</feature>
<feature type="cross-link" description="Glycyl lysine isopeptide (Lys-Gly) (interchain with G-Cter in SUMO2)" evidence="25">
    <location>
        <position position="559"/>
    </location>
</feature>
<feature type="cross-link" description="Glycyl lysine isopeptide (Lys-Gly) (interchain with G-Cter in SUMO2)" evidence="25">
    <location>
        <position position="595"/>
    </location>
</feature>
<feature type="splice variant" id="VSP_055083" description="In isoform 2." evidence="15 16">
    <location>
        <begin position="1"/>
        <end position="173"/>
    </location>
</feature>
<feature type="sequence conflict" description="In Ref. 1; BAA36707." evidence="17" ref="1">
    <original>V</original>
    <variation>M</variation>
    <location>
        <position position="75"/>
    </location>
</feature>
<proteinExistence type="evidence at protein level"/>
<reference key="1">
    <citation type="journal article" date="1999" name="J. Hum. Genet.">
        <title>Molecular cloning, mapping and characterization of a novel human gene, MTA1-L1. showing homology to a metastasis-associated gene, MTA1.</title>
        <authorList>
            <person name="Futamura M."/>
            <person name="Nishimori H."/>
            <person name="Shiratsuchi T."/>
            <person name="Saji S."/>
            <person name="Nakamura Y."/>
            <person name="Tokino T."/>
        </authorList>
    </citation>
    <scope>NUCLEOTIDE SEQUENCE [MRNA] (ISOFORM 1)</scope>
</reference>
<reference key="2">
    <citation type="journal article" date="2000" name="Nature">
        <title>Deacetylation of p53 modulates its effect on cell growth and apoptosis.</title>
        <authorList>
            <person name="Luo J."/>
            <person name="Su F."/>
            <person name="Chen D."/>
            <person name="Shiloh A."/>
            <person name="Gu W."/>
        </authorList>
    </citation>
    <scope>NUCLEOTIDE SEQUENCE [MRNA] (ISOFORM 1)</scope>
    <scope>INTERACTION WITH TP53</scope>
</reference>
<reference key="3">
    <citation type="journal article" date="2004" name="Nat. Genet.">
        <title>Complete sequencing and characterization of 21,243 full-length human cDNAs.</title>
        <authorList>
            <person name="Ota T."/>
            <person name="Suzuki Y."/>
            <person name="Nishikawa T."/>
            <person name="Otsuki T."/>
            <person name="Sugiyama T."/>
            <person name="Irie R."/>
            <person name="Wakamatsu A."/>
            <person name="Hayashi K."/>
            <person name="Sato H."/>
            <person name="Nagai K."/>
            <person name="Kimura K."/>
            <person name="Makita H."/>
            <person name="Sekine M."/>
            <person name="Obayashi M."/>
            <person name="Nishi T."/>
            <person name="Shibahara T."/>
            <person name="Tanaka T."/>
            <person name="Ishii S."/>
            <person name="Yamamoto J."/>
            <person name="Saito K."/>
            <person name="Kawai Y."/>
            <person name="Isono Y."/>
            <person name="Nakamura Y."/>
            <person name="Nagahari K."/>
            <person name="Murakami K."/>
            <person name="Yasuda T."/>
            <person name="Iwayanagi T."/>
            <person name="Wagatsuma M."/>
            <person name="Shiratori A."/>
            <person name="Sudo H."/>
            <person name="Hosoiri T."/>
            <person name="Kaku Y."/>
            <person name="Kodaira H."/>
            <person name="Kondo H."/>
            <person name="Sugawara M."/>
            <person name="Takahashi M."/>
            <person name="Kanda K."/>
            <person name="Yokoi T."/>
            <person name="Furuya T."/>
            <person name="Kikkawa E."/>
            <person name="Omura Y."/>
            <person name="Abe K."/>
            <person name="Kamihara K."/>
            <person name="Katsuta N."/>
            <person name="Sato K."/>
            <person name="Tanikawa M."/>
            <person name="Yamazaki M."/>
            <person name="Ninomiya K."/>
            <person name="Ishibashi T."/>
            <person name="Yamashita H."/>
            <person name="Murakawa K."/>
            <person name="Fujimori K."/>
            <person name="Tanai H."/>
            <person name="Kimata M."/>
            <person name="Watanabe M."/>
            <person name="Hiraoka S."/>
            <person name="Chiba Y."/>
            <person name="Ishida S."/>
            <person name="Ono Y."/>
            <person name="Takiguchi S."/>
            <person name="Watanabe S."/>
            <person name="Yosida M."/>
            <person name="Hotuta T."/>
            <person name="Kusano J."/>
            <person name="Kanehori K."/>
            <person name="Takahashi-Fujii A."/>
            <person name="Hara H."/>
            <person name="Tanase T.-O."/>
            <person name="Nomura Y."/>
            <person name="Togiya S."/>
            <person name="Komai F."/>
            <person name="Hara R."/>
            <person name="Takeuchi K."/>
            <person name="Arita M."/>
            <person name="Imose N."/>
            <person name="Musashino K."/>
            <person name="Yuuki H."/>
            <person name="Oshima A."/>
            <person name="Sasaki N."/>
            <person name="Aotsuka S."/>
            <person name="Yoshikawa Y."/>
            <person name="Matsunawa H."/>
            <person name="Ichihara T."/>
            <person name="Shiohata N."/>
            <person name="Sano S."/>
            <person name="Moriya S."/>
            <person name="Momiyama H."/>
            <person name="Satoh N."/>
            <person name="Takami S."/>
            <person name="Terashima Y."/>
            <person name="Suzuki O."/>
            <person name="Nakagawa S."/>
            <person name="Senoh A."/>
            <person name="Mizoguchi H."/>
            <person name="Goto Y."/>
            <person name="Shimizu F."/>
            <person name="Wakebe H."/>
            <person name="Hishigaki H."/>
            <person name="Watanabe T."/>
            <person name="Sugiyama A."/>
            <person name="Takemoto M."/>
            <person name="Kawakami B."/>
            <person name="Yamazaki M."/>
            <person name="Watanabe K."/>
            <person name="Kumagai A."/>
            <person name="Itakura S."/>
            <person name="Fukuzumi Y."/>
            <person name="Fujimori Y."/>
            <person name="Komiyama M."/>
            <person name="Tashiro H."/>
            <person name="Tanigami A."/>
            <person name="Fujiwara T."/>
            <person name="Ono T."/>
            <person name="Yamada K."/>
            <person name="Fujii Y."/>
            <person name="Ozaki K."/>
            <person name="Hirao M."/>
            <person name="Ohmori Y."/>
            <person name="Kawabata A."/>
            <person name="Hikiji T."/>
            <person name="Kobatake N."/>
            <person name="Inagaki H."/>
            <person name="Ikema Y."/>
            <person name="Okamoto S."/>
            <person name="Okitani R."/>
            <person name="Kawakami T."/>
            <person name="Noguchi S."/>
            <person name="Itoh T."/>
            <person name="Shigeta K."/>
            <person name="Senba T."/>
            <person name="Matsumura K."/>
            <person name="Nakajima Y."/>
            <person name="Mizuno T."/>
            <person name="Morinaga M."/>
            <person name="Sasaki M."/>
            <person name="Togashi T."/>
            <person name="Oyama M."/>
            <person name="Hata H."/>
            <person name="Watanabe M."/>
            <person name="Komatsu T."/>
            <person name="Mizushima-Sugano J."/>
            <person name="Satoh T."/>
            <person name="Shirai Y."/>
            <person name="Takahashi Y."/>
            <person name="Nakagawa K."/>
            <person name="Okumura K."/>
            <person name="Nagase T."/>
            <person name="Nomura N."/>
            <person name="Kikuchi H."/>
            <person name="Masuho Y."/>
            <person name="Yamashita R."/>
            <person name="Nakai K."/>
            <person name="Yada T."/>
            <person name="Nakamura Y."/>
            <person name="Ohara O."/>
            <person name="Isogai T."/>
            <person name="Sugano S."/>
        </authorList>
    </citation>
    <scope>NUCLEOTIDE SEQUENCE [LARGE SCALE MRNA] (ISOFORM 2)</scope>
    <source>
        <tissue>Mammary gland</tissue>
    </source>
</reference>
<reference key="4">
    <citation type="journal article" date="2007" name="BMC Genomics">
        <title>The full-ORF clone resource of the German cDNA consortium.</title>
        <authorList>
            <person name="Bechtel S."/>
            <person name="Rosenfelder H."/>
            <person name="Duda A."/>
            <person name="Schmidt C.P."/>
            <person name="Ernst U."/>
            <person name="Wellenreuther R."/>
            <person name="Mehrle A."/>
            <person name="Schuster C."/>
            <person name="Bahr A."/>
            <person name="Bloecker H."/>
            <person name="Heubner D."/>
            <person name="Hoerlein A."/>
            <person name="Michel G."/>
            <person name="Wedler H."/>
            <person name="Koehrer K."/>
            <person name="Ottenwaelder B."/>
            <person name="Poustka A."/>
            <person name="Wiemann S."/>
            <person name="Schupp I."/>
        </authorList>
    </citation>
    <scope>NUCLEOTIDE SEQUENCE [LARGE SCALE MRNA] (ISOFORM 2)</scope>
    <source>
        <tissue>Retina</tissue>
    </source>
</reference>
<reference key="5">
    <citation type="journal article" date="2006" name="Nature">
        <title>Human chromosome 11 DNA sequence and analysis including novel gene identification.</title>
        <authorList>
            <person name="Taylor T.D."/>
            <person name="Noguchi H."/>
            <person name="Totoki Y."/>
            <person name="Toyoda A."/>
            <person name="Kuroki Y."/>
            <person name="Dewar K."/>
            <person name="Lloyd C."/>
            <person name="Itoh T."/>
            <person name="Takeda T."/>
            <person name="Kim D.-W."/>
            <person name="She X."/>
            <person name="Barlow K.F."/>
            <person name="Bloom T."/>
            <person name="Bruford E."/>
            <person name="Chang J.L."/>
            <person name="Cuomo C.A."/>
            <person name="Eichler E."/>
            <person name="FitzGerald M.G."/>
            <person name="Jaffe D.B."/>
            <person name="LaButti K."/>
            <person name="Nicol R."/>
            <person name="Park H.-S."/>
            <person name="Seaman C."/>
            <person name="Sougnez C."/>
            <person name="Yang X."/>
            <person name="Zimmer A.R."/>
            <person name="Zody M.C."/>
            <person name="Birren B.W."/>
            <person name="Nusbaum C."/>
            <person name="Fujiyama A."/>
            <person name="Hattori M."/>
            <person name="Rogers J."/>
            <person name="Lander E.S."/>
            <person name="Sakaki Y."/>
        </authorList>
    </citation>
    <scope>NUCLEOTIDE SEQUENCE [LARGE SCALE GENOMIC DNA]</scope>
</reference>
<reference key="6">
    <citation type="journal article" date="2004" name="Genome Res.">
        <title>The status, quality, and expansion of the NIH full-length cDNA project: the Mammalian Gene Collection (MGC).</title>
        <authorList>
            <consortium name="The MGC Project Team"/>
        </authorList>
    </citation>
    <scope>NUCLEOTIDE SEQUENCE [LARGE SCALE MRNA] (ISOFORM 1)</scope>
    <source>
        <tissue>Brain</tissue>
        <tissue>Uterus</tissue>
    </source>
</reference>
<reference key="7">
    <citation type="journal article" date="2001" name="Genes Dev.">
        <title>Sharp, an inducible cofactor that integrates nuclear receptor repression and activation.</title>
        <authorList>
            <person name="Shi Y."/>
            <person name="Downes M."/>
            <person name="Xie W."/>
            <person name="Kao H.-Y."/>
            <person name="Ordentlich P."/>
            <person name="Tsai C.-C."/>
            <person name="Hon M."/>
            <person name="Evans R.M."/>
        </authorList>
    </citation>
    <scope>INTERACTION WITH MINT</scope>
</reference>
<reference key="8">
    <citation type="journal article" date="2006" name="Cell">
        <title>Global, in vivo, and site-specific phosphorylation dynamics in signaling networks.</title>
        <authorList>
            <person name="Olsen J.V."/>
            <person name="Blagoev B."/>
            <person name="Gnad F."/>
            <person name="Macek B."/>
            <person name="Kumar C."/>
            <person name="Mortensen P."/>
            <person name="Mann M."/>
        </authorList>
    </citation>
    <scope>IDENTIFICATION BY MASS SPECTROMETRY [LARGE SCALE ANALYSIS]</scope>
    <source>
        <tissue>Cervix carcinoma</tissue>
    </source>
</reference>
<reference key="9">
    <citation type="journal article" date="2006" name="Mol. Cell. Biol.">
        <title>MBD2/NuRD and MBD3/NuRD, two distinct complexes with different biochemical and functional properties.</title>
        <authorList>
            <person name="Le Guezennec X."/>
            <person name="Vermeulen M."/>
            <person name="Brinkman A.B."/>
            <person name="Hoeijmakers W.A."/>
            <person name="Cohen A."/>
            <person name="Lasonder E."/>
            <person name="Stunnenberg H.G."/>
        </authorList>
    </citation>
    <scope>FUNCTION</scope>
    <scope>IDENTIFICATION IN THE NURD COMPLEX</scope>
    <scope>IDENTIFICATION BY MASS SPECTROMETRY</scope>
</reference>
<reference key="10">
    <citation type="journal article" date="2008" name="J. Proteome Res.">
        <title>Combining protein-based IMAC, peptide-based IMAC, and MudPIT for efficient phosphoproteomic analysis.</title>
        <authorList>
            <person name="Cantin G.T."/>
            <person name="Yi W."/>
            <person name="Lu B."/>
            <person name="Park S.K."/>
            <person name="Xu T."/>
            <person name="Lee J.-D."/>
            <person name="Yates J.R. III"/>
        </authorList>
    </citation>
    <scope>IDENTIFICATION BY MASS SPECTROMETRY [LARGE SCALE ANALYSIS]</scope>
    <source>
        <tissue>Cervix carcinoma</tissue>
    </source>
</reference>
<reference key="11">
    <citation type="journal article" date="2008" name="Mol. Cell">
        <title>Kinase-selective enrichment enables quantitative phosphoproteomics of the kinome across the cell cycle.</title>
        <authorList>
            <person name="Daub H."/>
            <person name="Olsen J.V."/>
            <person name="Bairlein M."/>
            <person name="Gnad F."/>
            <person name="Oppermann F.S."/>
            <person name="Korner R."/>
            <person name="Greff Z."/>
            <person name="Keri G."/>
            <person name="Stemmann O."/>
            <person name="Mann M."/>
        </authorList>
    </citation>
    <scope>IDENTIFICATION BY MASS SPECTROMETRY [LARGE SCALE ANALYSIS]</scope>
    <source>
        <tissue>Cervix carcinoma</tissue>
    </source>
</reference>
<reference key="12">
    <citation type="journal article" date="2008" name="Proc. Natl. Acad. Sci. U.S.A.">
        <title>A quantitative atlas of mitotic phosphorylation.</title>
        <authorList>
            <person name="Dephoure N."/>
            <person name="Zhou C."/>
            <person name="Villen J."/>
            <person name="Beausoleil S.A."/>
            <person name="Bakalarski C.E."/>
            <person name="Elledge S.J."/>
            <person name="Gygi S.P."/>
        </authorList>
    </citation>
    <scope>PHOSPHORYLATION [LARGE SCALE ANALYSIS] AT SER-433 AND SER-435</scope>
    <scope>IDENTIFICATION BY MASS SPECTROMETRY [LARGE SCALE ANALYSIS]</scope>
    <source>
        <tissue>Cervix carcinoma</tissue>
    </source>
</reference>
<reference key="13">
    <citation type="journal article" date="2008" name="Proc. Natl. Acad. Sci. U.S.A.">
        <title>RCS1, a substrate of APC/C, controls the metaphase to anaphase transition.</title>
        <authorList>
            <person name="Zhao W.M."/>
            <person name="Coppinger J.A."/>
            <person name="Seki A."/>
            <person name="Cheng X.L."/>
            <person name="Yates J.R. III"/>
            <person name="Fang G."/>
        </authorList>
    </citation>
    <scope>INTERACTION WITH PIMREG</scope>
</reference>
<reference key="14">
    <citation type="journal article" date="2009" name="Sci. Signal.">
        <title>Quantitative phosphoproteomic analysis of T cell receptor signaling reveals system-wide modulation of protein-protein interactions.</title>
        <authorList>
            <person name="Mayya V."/>
            <person name="Lundgren D.H."/>
            <person name="Hwang S.-I."/>
            <person name="Rezaul K."/>
            <person name="Wu L."/>
            <person name="Eng J.K."/>
            <person name="Rodionov V."/>
            <person name="Han D.K."/>
        </authorList>
    </citation>
    <scope>PHOSPHORYLATION [LARGE SCALE ANALYSIS] AT SER-435</scope>
    <scope>IDENTIFICATION BY MASS SPECTROMETRY [LARGE SCALE ANALYSIS]</scope>
    <source>
        <tissue>Leukemic T-cell</tissue>
    </source>
</reference>
<reference key="15">
    <citation type="journal article" date="2009" name="Science">
        <title>Lysine acetylation targets protein complexes and co-regulates major cellular functions.</title>
        <authorList>
            <person name="Choudhary C."/>
            <person name="Kumar C."/>
            <person name="Gnad F."/>
            <person name="Nielsen M.L."/>
            <person name="Rehman M."/>
            <person name="Walther T.C."/>
            <person name="Olsen J.V."/>
            <person name="Mann M."/>
        </authorList>
    </citation>
    <scope>ACETYLATION [LARGE SCALE ANALYSIS] AT LYS-152</scope>
    <scope>IDENTIFICATION BY MASS SPECTROMETRY [LARGE SCALE ANALYSIS]</scope>
</reference>
<reference key="16">
    <citation type="journal article" date="2010" name="Sci. Signal.">
        <title>Quantitative phosphoproteomics reveals widespread full phosphorylation site occupancy during mitosis.</title>
        <authorList>
            <person name="Olsen J.V."/>
            <person name="Vermeulen M."/>
            <person name="Santamaria A."/>
            <person name="Kumar C."/>
            <person name="Miller M.L."/>
            <person name="Jensen L.J."/>
            <person name="Gnad F."/>
            <person name="Cox J."/>
            <person name="Jensen T.S."/>
            <person name="Nigg E.A."/>
            <person name="Brunak S."/>
            <person name="Mann M."/>
        </authorList>
    </citation>
    <scope>PHOSPHORYLATION [LARGE SCALE ANALYSIS] AT SER-435 AND THR-534</scope>
    <scope>IDENTIFICATION BY MASS SPECTROMETRY [LARGE SCALE ANALYSIS]</scope>
    <source>
        <tissue>Cervix carcinoma</tissue>
    </source>
</reference>
<reference key="17">
    <citation type="journal article" date="2011" name="BMC Syst. Biol.">
        <title>Initial characterization of the human central proteome.</title>
        <authorList>
            <person name="Burkard T.R."/>
            <person name="Planyavsky M."/>
            <person name="Kaupe I."/>
            <person name="Breitwieser F.P."/>
            <person name="Buerckstuemmer T."/>
            <person name="Bennett K.L."/>
            <person name="Superti-Furga G."/>
            <person name="Colinge J."/>
        </authorList>
    </citation>
    <scope>IDENTIFICATION BY MASS SPECTROMETRY [LARGE SCALE ANALYSIS]</scope>
</reference>
<reference key="18">
    <citation type="journal article" date="2011" name="J. Biol. Chem.">
        <title>SUMOylation and SUMO-interacting motif (SIM) of metastasis tumor antigen 1 (MTA1) synergistically regulate its transcriptional repressor function.</title>
        <authorList>
            <person name="Cong L."/>
            <person name="Pakala S.B."/>
            <person name="Ohshiro K."/>
            <person name="Li D.Q."/>
            <person name="Kumar R."/>
        </authorList>
    </citation>
    <scope>SUMOYLATION</scope>
</reference>
<reference key="19">
    <citation type="journal article" date="2011" name="Sci. Signal.">
        <title>System-wide temporal characterization of the proteome and phosphoproteome of human embryonic stem cell differentiation.</title>
        <authorList>
            <person name="Rigbolt K.T."/>
            <person name="Prokhorova T.A."/>
            <person name="Akimov V."/>
            <person name="Henningsen J."/>
            <person name="Johansen P.T."/>
            <person name="Kratchmarova I."/>
            <person name="Kassem M."/>
            <person name="Mann M."/>
            <person name="Olsen J.V."/>
            <person name="Blagoev B."/>
        </authorList>
    </citation>
    <scope>PHOSPHORYLATION [LARGE SCALE ANALYSIS] AT SER-548</scope>
    <scope>IDENTIFICATION BY MASS SPECTROMETRY [LARGE SCALE ANALYSIS]</scope>
</reference>
<reference key="20">
    <citation type="journal article" date="2013" name="J. Proteome Res.">
        <title>Toward a comprehensive characterization of a human cancer cell phosphoproteome.</title>
        <authorList>
            <person name="Zhou H."/>
            <person name="Di Palma S."/>
            <person name="Preisinger C."/>
            <person name="Peng M."/>
            <person name="Polat A.N."/>
            <person name="Heck A.J."/>
            <person name="Mohammed S."/>
        </authorList>
    </citation>
    <scope>PHOSPHORYLATION [LARGE SCALE ANALYSIS] AT SER-52; SER-54; SER-435; THR-534 AND SER-548</scope>
    <scope>IDENTIFICATION BY MASS SPECTROMETRY [LARGE SCALE ANALYSIS]</scope>
    <source>
        <tissue>Cervix carcinoma</tissue>
        <tissue>Erythroleukemia</tissue>
    </source>
</reference>
<reference key="21">
    <citation type="journal article" date="2013" name="Oncogene">
        <title>RBB, a novel transcription repressor, represses the transcription of HDM2 oncogene.</title>
        <authorList>
            <person name="Xuan C."/>
            <person name="Wang Q."/>
            <person name="Han X."/>
            <person name="Duan Y."/>
            <person name="Li L."/>
            <person name="Shi L."/>
            <person name="Wang Y."/>
            <person name="Shan L."/>
            <person name="Yao Z."/>
            <person name="Shang Y."/>
        </authorList>
    </citation>
    <scope>INTERACTION WITH NACC2</scope>
</reference>
<reference key="22">
    <citation type="journal article" date="2014" name="J. Proteomics">
        <title>An enzyme assisted RP-RPLC approach for in-depth analysis of human liver phosphoproteome.</title>
        <authorList>
            <person name="Bian Y."/>
            <person name="Song C."/>
            <person name="Cheng K."/>
            <person name="Dong M."/>
            <person name="Wang F."/>
            <person name="Huang J."/>
            <person name="Sun D."/>
            <person name="Wang L."/>
            <person name="Ye M."/>
            <person name="Zou H."/>
        </authorList>
    </citation>
    <scope>PHOSPHORYLATION [LARGE SCALE ANALYSIS] AT SER-435</scope>
    <scope>IDENTIFICATION BY MASS SPECTROMETRY [LARGE SCALE ANALYSIS]</scope>
    <source>
        <tissue>Liver</tissue>
    </source>
</reference>
<reference key="23">
    <citation type="journal article" date="2015" name="PLoS ONE">
        <title>Identification of Novel Proteins Co-Purifying with Cockayne Syndrome Group B (CSB) Reveals Potential Roles for CSB in RNA Metabolism and Chromatin Dynamics.</title>
        <authorList>
            <person name="Nicolai S."/>
            <person name="Filippi S."/>
            <person name="Caputo M."/>
            <person name="Cipak L."/>
            <person name="Gregan J."/>
            <person name="Ammerer G."/>
            <person name="Frontini M."/>
            <person name="Willems D."/>
            <person name="Prantera G."/>
            <person name="Balajee A.S."/>
            <person name="Proietti-De-Santis L."/>
        </authorList>
    </citation>
    <scope>INTERACTION WITH ERCC6</scope>
</reference>
<reference key="24">
    <citation type="journal article" date="2017" name="Nat. Struct. Mol. Biol.">
        <title>Site-specific mapping of the human SUMO proteome reveals co-modification with phosphorylation.</title>
        <authorList>
            <person name="Hendriks I.A."/>
            <person name="Lyon D."/>
            <person name="Young C."/>
            <person name="Jensen L.J."/>
            <person name="Vertegaal A.C."/>
            <person name="Nielsen M.L."/>
        </authorList>
    </citation>
    <scope>SUMOYLATION [LARGE SCALE ANALYSIS] AT LYS-492; LYS-508; LYS-559 AND LYS-595</scope>
    <scope>IDENTIFICATION BY MASS SPECTROMETRY [LARGE SCALE ANALYSIS]</scope>
</reference>
<reference key="25">
    <citation type="journal article" date="2017" name="Nucleic Acids Res.">
        <title>CHD3 and CHD4 form distinct NuRD complexes with different yet overlapping functionality.</title>
        <authorList>
            <person name="Hoffmeister H."/>
            <person name="Fuchs A."/>
            <person name="Erdel F."/>
            <person name="Pinz S."/>
            <person name="Groebner-Ferreira R."/>
            <person name="Bruckmann A."/>
            <person name="Deutzmann R."/>
            <person name="Schwartz U."/>
            <person name="Maldonado R."/>
            <person name="Huber C."/>
            <person name="Dendorfer A.S."/>
            <person name="Rippe K."/>
            <person name="Laengst G."/>
        </authorList>
    </citation>
    <scope>FUNCTION</scope>
    <scope>IDENTIFICATION IN THE NURD COMPLEX</scope>
    <scope>INTERACTION WITH CHD3 AND CHD4</scope>
    <scope>IDENTIFICATION BY MASS SPECTROMETRY</scope>
    <scope>SUBCELLULAR LOCATION</scope>
</reference>
<reference key="26">
    <citation type="journal article" date="2021" name="FEBS J.">
        <title>Cross-linking mass spectrometry reveals the structural topology of peripheral NuRD subunits relative to the core complex.</title>
        <authorList>
            <person name="Spruijt C.G."/>
            <person name="Graewe C."/>
            <person name="Kleinendorst S.C."/>
            <person name="Baltissen M.P.A."/>
            <person name="Vermeulen M."/>
        </authorList>
    </citation>
    <scope>IDENTIFICATION IN THE NURD COMPLEX</scope>
    <scope>INTERACTION WITH GATAD2A</scope>
    <scope>IDENTIFICATION BY MASS SPECTROMETRY</scope>
    <scope>SUBCELLULAR LOCATION</scope>
</reference>
<reference key="27">
    <citation type="journal article" date="2024" name="Structure">
        <title>Structural insights into the DNA-binding mechanism of BCL11A: The integral role of ZnF6.</title>
        <authorList>
            <person name="Viennet T."/>
            <person name="Yin M."/>
            <person name="Jayaraj A."/>
            <person name="Kim W."/>
            <person name="Sun Z.J."/>
            <person name="Fujiwara Y."/>
            <person name="Zhang K."/>
            <person name="Seruggia D."/>
            <person name="Seo H.S."/>
            <person name="Dhe-Paganon S."/>
            <person name="Orkin S.H."/>
            <person name="Arthanari H."/>
        </authorList>
    </citation>
    <scope>INTERACTION WITH BCL11A</scope>
</reference>
<organism>
    <name type="scientific">Homo sapiens</name>
    <name type="common">Human</name>
    <dbReference type="NCBI Taxonomy" id="9606"/>
    <lineage>
        <taxon>Eukaryota</taxon>
        <taxon>Metazoa</taxon>
        <taxon>Chordata</taxon>
        <taxon>Craniata</taxon>
        <taxon>Vertebrata</taxon>
        <taxon>Euteleostomi</taxon>
        <taxon>Mammalia</taxon>
        <taxon>Eutheria</taxon>
        <taxon>Euarchontoglires</taxon>
        <taxon>Primates</taxon>
        <taxon>Haplorrhini</taxon>
        <taxon>Catarrhini</taxon>
        <taxon>Hominidae</taxon>
        <taxon>Homo</taxon>
    </lineage>
</organism>
<comment type="function">
    <text evidence="8 12">May function as a transcriptional coregulator (PubMed:16428440, PubMed:28977666). Acts as a component of the histone deacetylase NuRD complex which participates in the remodeling of chromatin (PubMed:16428440, PubMed:28977666).</text>
</comment>
<comment type="subunit">
    <text evidence="1 6 7 8 9 10 11 12 13 14">Component of the nucleosome remodeling and deacetylase (NuRD) repressor complex, composed of core proteins MTA1, MTA2, MTA3, RBBP4, RBBP7, HDAC1, HDAC2, MBD2, MBD3, and peripherally associated proteins CDK2AP1, CDK2AP2, GATAD2A, GATAD2B, CHD3, CHD4 and CHD5 (PubMed:16428440, PubMed:28977666, PubMed:33283408). The exact stoichiometry of the NuRD complex is unknown, and some subunits such as MBD2 and MBD3, GATAD2A and GATAD2B, and CHD3, CHD4 and CHD5 define mutually exclusive NuRD complexes (PubMed:16428440, PubMed:28977666, PubMed:33283408). Interacts with CHD3 (PubMed:28977666). Interacts with CHD4 (PubMed:28977666). Interacts with GATAD2A (PubMed:33283408). Interacts with HDAC7 (By similarity). Interacts with MBD3 (By similarity). Interacts with p53/TP53 (PubMed:11099047). Interacts with MINT (PubMed:11331609). Interacts with PIMREG (PubMed:18757745). Interacts with NACC2 (PubMed:22926524). Interacts with ERCC6 (PubMed:26030138). Interacts with PWWP2B (By similarity). Interacts with transcription factor BCL11A (PubMed:39423807).</text>
</comment>
<comment type="interaction">
    <interactant intactId="EBI-1783035">
        <id>O94776</id>
    </interactant>
    <interactant intactId="EBI-744366">
        <id>Q96KQ7</id>
        <label>EHMT2</label>
    </interactant>
    <organismsDiffer>false</organismsDiffer>
    <experiments>7</experiments>
</comment>
<comment type="interaction">
    <interactant intactId="EBI-1783035">
        <id>O94776</id>
    </interactant>
    <interactant intactId="EBI-301834">
        <id>Q13547</id>
        <label>HDAC1</label>
    </interactant>
    <organismsDiffer>false</organismsDiffer>
    <experiments>18</experiments>
</comment>
<comment type="interaction">
    <interactant intactId="EBI-1783035">
        <id>O94776</id>
    </interactant>
    <interactant intactId="EBI-1164361">
        <id>Q99497</id>
        <label>PARK7</label>
    </interactant>
    <organismsDiffer>false</organismsDiffer>
    <experiments>3</experiments>
</comment>
<comment type="interaction">
    <interactant intactId="EBI-1783035">
        <id>O94776</id>
    </interactant>
    <interactant intactId="EBI-352227">
        <id>Q16576</id>
        <label>RBBP7</label>
    </interactant>
    <organismsDiffer>false</organismsDiffer>
    <experiments>14</experiments>
</comment>
<comment type="interaction">
    <interactant intactId="EBI-1783035">
        <id>O94776</id>
    </interactant>
    <interactant intactId="EBI-717614">
        <id>O60315</id>
        <label>ZEB2</label>
    </interactant>
    <organismsDiffer>false</organismsDiffer>
    <experiments>4</experiments>
</comment>
<comment type="interaction">
    <interactant intactId="EBI-1783035">
        <id>O94776</id>
    </interactant>
    <interactant intactId="EBI-5564776">
        <id>Q17R98</id>
        <label>ZNF827</label>
    </interactant>
    <organismsDiffer>false</organismsDiffer>
    <experiments>2</experiments>
</comment>
<comment type="subcellular location">
    <subcellularLocation>
        <location evidence="3 4 12 13">Nucleus</location>
    </subcellularLocation>
</comment>
<comment type="alternative products">
    <event type="alternative splicing"/>
    <isoform>
        <id>O94776-1</id>
        <name>1</name>
        <sequence type="displayed"/>
    </isoform>
    <isoform>
        <id>O94776-2</id>
        <name>2</name>
        <sequence type="described" ref="VSP_055083"/>
    </isoform>
</comment>
<comment type="tissue specificity">
    <text>Widely expressed.</text>
</comment>
<comment type="similarity">
    <text evidence="17">Belongs to the metastasis-associated protein family.</text>
</comment>
<comment type="sequence caution" evidence="17">
    <conflict type="miscellaneous discrepancy">
        <sequence resource="EMBL-CDS" id="AAH23656"/>
    </conflict>
    <text>Contaminating sequence. Potential poly-A sequence.</text>
</comment>